<evidence type="ECO:0000250" key="1"/>
<evidence type="ECO:0000250" key="2">
    <source>
        <dbReference type="UniProtKB" id="Q9VVV9"/>
    </source>
</evidence>
<evidence type="ECO:0000255" key="3"/>
<evidence type="ECO:0000255" key="4">
    <source>
        <dbReference type="PROSITE-ProRule" id="PRU00448"/>
    </source>
</evidence>
<evidence type="ECO:0000256" key="5">
    <source>
        <dbReference type="SAM" id="MobiDB-lite"/>
    </source>
</evidence>
<gene>
    <name evidence="2" type="primary">nkd</name>
    <name type="ORF">GA11099</name>
</gene>
<sequence>MAGNIVKWWKHKILGGYKQFSVQECTTDSEELMYHQVRASSSCSAPPDLLLVSERDNNIQLRSPVVNIITTPPGNASGSASNKQQQLQQQQGHQHHHQAMPMPHTHASRHHHHQQQQQQQLPQDMSSSGSHTKHLRISSSSGGKHGKYANMQQQQQQQQTAAAATGVDEDVVDAAAAAAAAPHGAHQQMHSRHLHHHKEERIRLEEFTCDVSVEGGKSSQPLQFSFTFYDLDGHHGKITKDDIVGIVYTIYESIGKSVVVPHCGSKTINVRLTVSPEGKSKSAQQPAMAMGVVPASVPLPAAALGNNNNSNNNNNNKLKKLPTGLAAMSKQMNGGNGGGGALTTSAGTRRQHRYRPRKLIKSDDEDDDSNSEKEKERERERERESHAADQQPSGSGSKGAGSKSHHHHHHHGRYQKNQSGAKLEHQQQQQQQLCCADTPDNTYENMLNLKQDTQAAGNEATVPDCPSSHRQLHHQRQQDIYMKQATQRVKMLRRARKQKYQDHCLETRQRSLSVGNDSGNWQNRHLQQSLQQQPQAAHKSASVSPPPLAGELMLDGVQLRQPRPPHQSHHQQLQQQQQQRKSAECWKSALNRNDLISIIRESMEKNRLCFQLNGKPQANVSPIRQPAAQQQQQQQRQRSSTGSKIPTLIANHSPAAPQSPLSCSPPPCTLSLSLSSSNHPAAATCSIPVPAQAQAQGQAQAQAQVPAPPAVIEVGGGHHQHDHPQPHIPIYHQQLAINPAVLAAQHSHNSAHNKLNLCGYDSFLHATICGGGSAAHSPPPTPSNVATVQPIPKKSHNQKSLLQGYQRLEQQQQQRSSKDYKNYGNLIYAKLSEQLQQKEREQRRHRHKQQQQQHHHQQQQQQQQQQNQQQQQQQQPLKPKEESLAEQRPPTSSSSSAGSKIFGDALECAHLLASEEEDLPASPPLTHSTPSKVVSTDTLIDLNDDVGEAVAEAVTESGGKQQQQQALEADEGQEQEVELDTSASSSMIHRYVHEHIHHHYHHFKEQQDV</sequence>
<name>NKD_DROPS</name>
<keyword id="KW-1003">Cell membrane</keyword>
<keyword id="KW-0963">Cytoplasm</keyword>
<keyword id="KW-0217">Developmental protein</keyword>
<keyword id="KW-0472">Membrane</keyword>
<keyword id="KW-0479">Metal-binding</keyword>
<keyword id="KW-0539">Nucleus</keyword>
<keyword id="KW-1185">Reference proteome</keyword>
<keyword id="KW-0879">Wnt signaling pathway</keyword>
<protein>
    <recommendedName>
        <fullName>Protein naked cuticle</fullName>
    </recommendedName>
</protein>
<proteinExistence type="inferred from homology"/>
<reference key="1">
    <citation type="journal article" date="2005" name="Genome Res.">
        <title>Comparative genome sequencing of Drosophila pseudoobscura: chromosomal, gene, and cis-element evolution.</title>
        <authorList>
            <person name="Richards S."/>
            <person name="Liu Y."/>
            <person name="Bettencourt B.R."/>
            <person name="Hradecky P."/>
            <person name="Letovsky S."/>
            <person name="Nielsen R."/>
            <person name="Thornton K."/>
            <person name="Hubisz M.J."/>
            <person name="Chen R."/>
            <person name="Meisel R.P."/>
            <person name="Couronne O."/>
            <person name="Hua S."/>
            <person name="Smith M.A."/>
            <person name="Zhang P."/>
            <person name="Liu J."/>
            <person name="Bussemaker H.J."/>
            <person name="van Batenburg M.F."/>
            <person name="Howells S.L."/>
            <person name="Scherer S.E."/>
            <person name="Sodergren E."/>
            <person name="Matthews B.B."/>
            <person name="Crosby M.A."/>
            <person name="Schroeder A.J."/>
            <person name="Ortiz-Barrientos D."/>
            <person name="Rives C.M."/>
            <person name="Metzker M.L."/>
            <person name="Muzny D.M."/>
            <person name="Scott G."/>
            <person name="Steffen D."/>
            <person name="Wheeler D.A."/>
            <person name="Worley K.C."/>
            <person name="Havlak P."/>
            <person name="Durbin K.J."/>
            <person name="Egan A."/>
            <person name="Gill R."/>
            <person name="Hume J."/>
            <person name="Morgan M.B."/>
            <person name="Miner G."/>
            <person name="Hamilton C."/>
            <person name="Huang Y."/>
            <person name="Waldron L."/>
            <person name="Verduzco D."/>
            <person name="Clerc-Blankenburg K.P."/>
            <person name="Dubchak I."/>
            <person name="Noor M.A.F."/>
            <person name="Anderson W."/>
            <person name="White K.P."/>
            <person name="Clark A.G."/>
            <person name="Schaeffer S.W."/>
            <person name="Gelbart W.M."/>
            <person name="Weinstock G.M."/>
            <person name="Gibbs R.A."/>
        </authorList>
    </citation>
    <scope>NUCLEOTIDE SEQUENCE [LARGE SCALE GENOMIC DNA]</scope>
    <source>
        <strain>MV2-25 / Tucson 14011-0121.94</strain>
    </source>
</reference>
<comment type="function">
    <text evidence="2">Cell autonomous antagonist of the canonical Wnt signaling pathway. May activate a second Wnt signaling pathway that controls planar cell polarity. Required for neuroblast specification (By similarity).</text>
</comment>
<comment type="subunit">
    <text evidence="2">Interacts with dsh.</text>
</comment>
<comment type="subcellular location">
    <subcellularLocation>
        <location evidence="2">Cell membrane</location>
    </subcellularLocation>
    <subcellularLocation>
        <location evidence="2">Cytoplasm</location>
    </subcellularLocation>
    <subcellularLocation>
        <location evidence="2">Nucleus</location>
    </subcellularLocation>
</comment>
<comment type="similarity">
    <text evidence="3">Belongs to the NKD family.</text>
</comment>
<dbReference type="EMBL" id="CH379070">
    <property type="protein sequence ID" value="EAL30423.2"/>
    <property type="molecule type" value="Genomic_DNA"/>
</dbReference>
<dbReference type="FunCoup" id="Q29DJ1">
    <property type="interactions" value="216"/>
</dbReference>
<dbReference type="STRING" id="46245.Q29DJ1"/>
<dbReference type="eggNOG" id="ENOG502QT1X">
    <property type="taxonomic scope" value="Eukaryota"/>
</dbReference>
<dbReference type="HOGENOM" id="CLU_314556_0_0_1"/>
<dbReference type="InParanoid" id="Q29DJ1"/>
<dbReference type="OMA" id="EQHTPDN"/>
<dbReference type="Proteomes" id="UP000001819">
    <property type="component" value="Unplaced"/>
</dbReference>
<dbReference type="GO" id="GO:0005737">
    <property type="term" value="C:cytoplasm"/>
    <property type="evidence" value="ECO:0000250"/>
    <property type="project" value="UniProtKB"/>
</dbReference>
<dbReference type="GO" id="GO:0005634">
    <property type="term" value="C:nucleus"/>
    <property type="evidence" value="ECO:0000250"/>
    <property type="project" value="UniProtKB"/>
</dbReference>
<dbReference type="GO" id="GO:0005886">
    <property type="term" value="C:plasma membrane"/>
    <property type="evidence" value="ECO:0007669"/>
    <property type="project" value="UniProtKB-SubCell"/>
</dbReference>
<dbReference type="GO" id="GO:0008270">
    <property type="term" value="F:zinc ion binding"/>
    <property type="evidence" value="ECO:0000250"/>
    <property type="project" value="UniProtKB"/>
</dbReference>
<dbReference type="GO" id="GO:0090090">
    <property type="term" value="P:negative regulation of canonical Wnt signaling pathway"/>
    <property type="evidence" value="ECO:0007669"/>
    <property type="project" value="UniProtKB-ARBA"/>
</dbReference>
<dbReference type="GO" id="GO:0014018">
    <property type="term" value="P:neuroblast fate specification"/>
    <property type="evidence" value="ECO:0000250"/>
    <property type="project" value="UniProtKB"/>
</dbReference>
<dbReference type="GO" id="GO:0016055">
    <property type="term" value="P:Wnt signaling pathway"/>
    <property type="evidence" value="ECO:0007669"/>
    <property type="project" value="UniProtKB-KW"/>
</dbReference>
<dbReference type="InterPro" id="IPR040140">
    <property type="entry name" value="Nkd-like"/>
</dbReference>
<dbReference type="PANTHER" id="PTHR22611">
    <property type="entry name" value="PROTEIN NAKED CUTICLE"/>
    <property type="match status" value="1"/>
</dbReference>
<dbReference type="PANTHER" id="PTHR22611:SF9">
    <property type="entry name" value="PROTEIN NAKED CUTICLE"/>
    <property type="match status" value="1"/>
</dbReference>
<feature type="chain" id="PRO_0000312826" description="Protein naked cuticle">
    <location>
        <begin position="1"/>
        <end position="1009"/>
    </location>
</feature>
<feature type="domain" description="EF-hand" evidence="4">
    <location>
        <begin position="217"/>
        <end position="253"/>
    </location>
</feature>
<feature type="region of interest" description="Disordered" evidence="5">
    <location>
        <begin position="68"/>
        <end position="166"/>
    </location>
</feature>
<feature type="region of interest" description="Interaction with dsh" evidence="1">
    <location>
        <begin position="206"/>
        <end position="282"/>
    </location>
</feature>
<feature type="region of interest" description="Disordered" evidence="5">
    <location>
        <begin position="328"/>
        <end position="433"/>
    </location>
</feature>
<feature type="region of interest" description="Disordered" evidence="5">
    <location>
        <begin position="456"/>
        <end position="479"/>
    </location>
</feature>
<feature type="region of interest" description="Disordered" evidence="5">
    <location>
        <begin position="515"/>
        <end position="580"/>
    </location>
</feature>
<feature type="region of interest" description="Required for nuclear localization and inhibition of Wnt signaling" evidence="1">
    <location>
        <begin position="584"/>
        <end position="613"/>
    </location>
</feature>
<feature type="region of interest" description="Disordered" evidence="5">
    <location>
        <begin position="619"/>
        <end position="662"/>
    </location>
</feature>
<feature type="region of interest" description="Disordered" evidence="5">
    <location>
        <begin position="773"/>
        <end position="799"/>
    </location>
</feature>
<feature type="region of interest" description="Disordered" evidence="5">
    <location>
        <begin position="835"/>
        <end position="899"/>
    </location>
</feature>
<feature type="region of interest" description="Disordered" evidence="5">
    <location>
        <begin position="955"/>
        <end position="982"/>
    </location>
</feature>
<feature type="compositionally biased region" description="Polar residues" evidence="5">
    <location>
        <begin position="68"/>
        <end position="83"/>
    </location>
</feature>
<feature type="compositionally biased region" description="Polar residues" evidence="5">
    <location>
        <begin position="121"/>
        <end position="130"/>
    </location>
</feature>
<feature type="compositionally biased region" description="Low complexity" evidence="5">
    <location>
        <begin position="152"/>
        <end position="166"/>
    </location>
</feature>
<feature type="compositionally biased region" description="Basic residues" evidence="5">
    <location>
        <begin position="349"/>
        <end position="359"/>
    </location>
</feature>
<feature type="compositionally biased region" description="Basic and acidic residues" evidence="5">
    <location>
        <begin position="370"/>
        <end position="387"/>
    </location>
</feature>
<feature type="compositionally biased region" description="Basic residues" evidence="5">
    <location>
        <begin position="403"/>
        <end position="414"/>
    </location>
</feature>
<feature type="compositionally biased region" description="Polar residues" evidence="5">
    <location>
        <begin position="515"/>
        <end position="525"/>
    </location>
</feature>
<feature type="compositionally biased region" description="Low complexity" evidence="5">
    <location>
        <begin position="526"/>
        <end position="535"/>
    </location>
</feature>
<feature type="compositionally biased region" description="Low complexity" evidence="5">
    <location>
        <begin position="570"/>
        <end position="580"/>
    </location>
</feature>
<feature type="compositionally biased region" description="Low complexity" evidence="5">
    <location>
        <begin position="624"/>
        <end position="638"/>
    </location>
</feature>
<feature type="compositionally biased region" description="Low complexity" evidence="5">
    <location>
        <begin position="653"/>
        <end position="662"/>
    </location>
</feature>
<feature type="compositionally biased region" description="Basic residues" evidence="5">
    <location>
        <begin position="843"/>
        <end position="857"/>
    </location>
</feature>
<feature type="compositionally biased region" description="Low complexity" evidence="5">
    <location>
        <begin position="858"/>
        <end position="875"/>
    </location>
</feature>
<feature type="compositionally biased region" description="Acidic residues" evidence="5">
    <location>
        <begin position="968"/>
        <end position="979"/>
    </location>
</feature>
<organism>
    <name type="scientific">Drosophila pseudoobscura pseudoobscura</name>
    <name type="common">Fruit fly</name>
    <dbReference type="NCBI Taxonomy" id="46245"/>
    <lineage>
        <taxon>Eukaryota</taxon>
        <taxon>Metazoa</taxon>
        <taxon>Ecdysozoa</taxon>
        <taxon>Arthropoda</taxon>
        <taxon>Hexapoda</taxon>
        <taxon>Insecta</taxon>
        <taxon>Pterygota</taxon>
        <taxon>Neoptera</taxon>
        <taxon>Endopterygota</taxon>
        <taxon>Diptera</taxon>
        <taxon>Brachycera</taxon>
        <taxon>Muscomorpha</taxon>
        <taxon>Ephydroidea</taxon>
        <taxon>Drosophilidae</taxon>
        <taxon>Drosophila</taxon>
        <taxon>Sophophora</taxon>
    </lineage>
</organism>
<accession>Q29DJ1</accession>